<reference key="1">
    <citation type="journal article" date="2006" name="Nat. Biotechnol.">
        <title>Genome sequence of the ubiquitous hydrocarbon-degrading marine bacterium Alcanivorax borkumensis.</title>
        <authorList>
            <person name="Schneiker S."/>
            <person name="Martins dos Santos V.A.P."/>
            <person name="Bartels D."/>
            <person name="Bekel T."/>
            <person name="Brecht M."/>
            <person name="Buhrmester J."/>
            <person name="Chernikova T.N."/>
            <person name="Denaro R."/>
            <person name="Ferrer M."/>
            <person name="Gertler C."/>
            <person name="Goesmann A."/>
            <person name="Golyshina O.V."/>
            <person name="Kaminski F."/>
            <person name="Khachane A.N."/>
            <person name="Lang S."/>
            <person name="Linke B."/>
            <person name="McHardy A.C."/>
            <person name="Meyer F."/>
            <person name="Nechitaylo T."/>
            <person name="Puehler A."/>
            <person name="Regenhardt D."/>
            <person name="Rupp O."/>
            <person name="Sabirova J.S."/>
            <person name="Selbitschka W."/>
            <person name="Yakimov M.M."/>
            <person name="Timmis K.N."/>
            <person name="Vorhoelter F.-J."/>
            <person name="Weidner S."/>
            <person name="Kaiser O."/>
            <person name="Golyshin P.N."/>
        </authorList>
    </citation>
    <scope>NUCLEOTIDE SEQUENCE [LARGE SCALE GENOMIC DNA]</scope>
    <source>
        <strain>ATCC 700651 / DSM 11573 / NCIMB 13689 / SK2</strain>
    </source>
</reference>
<sequence>MGQKVHPVGIRLGIVKEHNSLWYAGPKSYSDCLVTDLQVREYLFKRLKSASVSRIKIERPSENVRITIATARPGIVIGKKGEDVERLRRDVAAKMGVPVHINIEEVRKPDLDARLVGDNVAGQLERRVMFRRAMKRAVQNAMKSGAEGIRIQLSGRLGGAEIARTEWYREGRVPLHTLRADIDYASVRAETTYGTIGVKVWIFRGEVLGGMEQVQEEQKQSKGAKKRGRG</sequence>
<protein>
    <recommendedName>
        <fullName evidence="1">Small ribosomal subunit protein uS3</fullName>
    </recommendedName>
    <alternativeName>
        <fullName evidence="2">30S ribosomal protein S3</fullName>
    </alternativeName>
</protein>
<accession>Q0VSJ7</accession>
<comment type="function">
    <text evidence="1">Binds the lower part of the 30S subunit head. Binds mRNA in the 70S ribosome, positioning it for translation.</text>
</comment>
<comment type="subunit">
    <text evidence="1">Part of the 30S ribosomal subunit. Forms a tight complex with proteins S10 and S14.</text>
</comment>
<comment type="similarity">
    <text evidence="1">Belongs to the universal ribosomal protein uS3 family.</text>
</comment>
<gene>
    <name evidence="1" type="primary">rpsC</name>
    <name type="ordered locus">ABO_0403</name>
</gene>
<proteinExistence type="inferred from homology"/>
<feature type="chain" id="PRO_0000293746" description="Small ribosomal subunit protein uS3">
    <location>
        <begin position="1"/>
        <end position="230"/>
    </location>
</feature>
<feature type="domain" description="KH type-2" evidence="1">
    <location>
        <begin position="39"/>
        <end position="107"/>
    </location>
</feature>
<dbReference type="EMBL" id="AM286690">
    <property type="protein sequence ID" value="CAL15851.1"/>
    <property type="molecule type" value="Genomic_DNA"/>
</dbReference>
<dbReference type="RefSeq" id="WP_007149325.1">
    <property type="nucleotide sequence ID" value="NC_008260.1"/>
</dbReference>
<dbReference type="SMR" id="Q0VSJ7"/>
<dbReference type="STRING" id="393595.ABO_0403"/>
<dbReference type="KEGG" id="abo:ABO_0403"/>
<dbReference type="eggNOG" id="COG0092">
    <property type="taxonomic scope" value="Bacteria"/>
</dbReference>
<dbReference type="HOGENOM" id="CLU_058591_0_2_6"/>
<dbReference type="OrthoDB" id="9806396at2"/>
<dbReference type="Proteomes" id="UP000008871">
    <property type="component" value="Chromosome"/>
</dbReference>
<dbReference type="GO" id="GO:0022627">
    <property type="term" value="C:cytosolic small ribosomal subunit"/>
    <property type="evidence" value="ECO:0007669"/>
    <property type="project" value="TreeGrafter"/>
</dbReference>
<dbReference type="GO" id="GO:0003729">
    <property type="term" value="F:mRNA binding"/>
    <property type="evidence" value="ECO:0007669"/>
    <property type="project" value="UniProtKB-UniRule"/>
</dbReference>
<dbReference type="GO" id="GO:0019843">
    <property type="term" value="F:rRNA binding"/>
    <property type="evidence" value="ECO:0007669"/>
    <property type="project" value="UniProtKB-UniRule"/>
</dbReference>
<dbReference type="GO" id="GO:0003735">
    <property type="term" value="F:structural constituent of ribosome"/>
    <property type="evidence" value="ECO:0007669"/>
    <property type="project" value="InterPro"/>
</dbReference>
<dbReference type="GO" id="GO:0006412">
    <property type="term" value="P:translation"/>
    <property type="evidence" value="ECO:0007669"/>
    <property type="project" value="UniProtKB-UniRule"/>
</dbReference>
<dbReference type="CDD" id="cd02412">
    <property type="entry name" value="KH-II_30S_S3"/>
    <property type="match status" value="1"/>
</dbReference>
<dbReference type="FunFam" id="3.30.1140.32:FF:000001">
    <property type="entry name" value="30S ribosomal protein S3"/>
    <property type="match status" value="1"/>
</dbReference>
<dbReference type="FunFam" id="3.30.300.20:FF:000001">
    <property type="entry name" value="30S ribosomal protein S3"/>
    <property type="match status" value="1"/>
</dbReference>
<dbReference type="Gene3D" id="3.30.300.20">
    <property type="match status" value="1"/>
</dbReference>
<dbReference type="Gene3D" id="3.30.1140.32">
    <property type="entry name" value="Ribosomal protein S3, C-terminal domain"/>
    <property type="match status" value="1"/>
</dbReference>
<dbReference type="HAMAP" id="MF_01309_B">
    <property type="entry name" value="Ribosomal_uS3_B"/>
    <property type="match status" value="1"/>
</dbReference>
<dbReference type="InterPro" id="IPR004087">
    <property type="entry name" value="KH_dom"/>
</dbReference>
<dbReference type="InterPro" id="IPR015946">
    <property type="entry name" value="KH_dom-like_a/b"/>
</dbReference>
<dbReference type="InterPro" id="IPR004044">
    <property type="entry name" value="KH_dom_type_2"/>
</dbReference>
<dbReference type="InterPro" id="IPR009019">
    <property type="entry name" value="KH_sf_prok-type"/>
</dbReference>
<dbReference type="InterPro" id="IPR036419">
    <property type="entry name" value="Ribosomal_S3_C_sf"/>
</dbReference>
<dbReference type="InterPro" id="IPR005704">
    <property type="entry name" value="Ribosomal_uS3_bac-typ"/>
</dbReference>
<dbReference type="InterPro" id="IPR001351">
    <property type="entry name" value="Ribosomal_uS3_C"/>
</dbReference>
<dbReference type="InterPro" id="IPR018280">
    <property type="entry name" value="Ribosomal_uS3_CS"/>
</dbReference>
<dbReference type="NCBIfam" id="TIGR01009">
    <property type="entry name" value="rpsC_bact"/>
    <property type="match status" value="1"/>
</dbReference>
<dbReference type="PANTHER" id="PTHR11760">
    <property type="entry name" value="30S/40S RIBOSOMAL PROTEIN S3"/>
    <property type="match status" value="1"/>
</dbReference>
<dbReference type="PANTHER" id="PTHR11760:SF19">
    <property type="entry name" value="SMALL RIBOSOMAL SUBUNIT PROTEIN US3C"/>
    <property type="match status" value="1"/>
</dbReference>
<dbReference type="Pfam" id="PF07650">
    <property type="entry name" value="KH_2"/>
    <property type="match status" value="1"/>
</dbReference>
<dbReference type="Pfam" id="PF00189">
    <property type="entry name" value="Ribosomal_S3_C"/>
    <property type="match status" value="1"/>
</dbReference>
<dbReference type="SMART" id="SM00322">
    <property type="entry name" value="KH"/>
    <property type="match status" value="1"/>
</dbReference>
<dbReference type="SUPFAM" id="SSF54814">
    <property type="entry name" value="Prokaryotic type KH domain (KH-domain type II)"/>
    <property type="match status" value="1"/>
</dbReference>
<dbReference type="SUPFAM" id="SSF54821">
    <property type="entry name" value="Ribosomal protein S3 C-terminal domain"/>
    <property type="match status" value="1"/>
</dbReference>
<dbReference type="PROSITE" id="PS50823">
    <property type="entry name" value="KH_TYPE_2"/>
    <property type="match status" value="1"/>
</dbReference>
<dbReference type="PROSITE" id="PS00548">
    <property type="entry name" value="RIBOSOMAL_S3"/>
    <property type="match status" value="1"/>
</dbReference>
<evidence type="ECO:0000255" key="1">
    <source>
        <dbReference type="HAMAP-Rule" id="MF_01309"/>
    </source>
</evidence>
<evidence type="ECO:0000305" key="2"/>
<name>RS3_ALCBS</name>
<keyword id="KW-1185">Reference proteome</keyword>
<keyword id="KW-0687">Ribonucleoprotein</keyword>
<keyword id="KW-0689">Ribosomal protein</keyword>
<keyword id="KW-0694">RNA-binding</keyword>
<keyword id="KW-0699">rRNA-binding</keyword>
<organism>
    <name type="scientific">Alcanivorax borkumensis (strain ATCC 700651 / DSM 11573 / NCIMB 13689 / SK2)</name>
    <dbReference type="NCBI Taxonomy" id="393595"/>
    <lineage>
        <taxon>Bacteria</taxon>
        <taxon>Pseudomonadati</taxon>
        <taxon>Pseudomonadota</taxon>
        <taxon>Gammaproteobacteria</taxon>
        <taxon>Oceanospirillales</taxon>
        <taxon>Alcanivoracaceae</taxon>
        <taxon>Alcanivorax</taxon>
    </lineage>
</organism>